<organism>
    <name type="scientific">Arabidopsis thaliana</name>
    <name type="common">Mouse-ear cress</name>
    <dbReference type="NCBI Taxonomy" id="3702"/>
    <lineage>
        <taxon>Eukaryota</taxon>
        <taxon>Viridiplantae</taxon>
        <taxon>Streptophyta</taxon>
        <taxon>Embryophyta</taxon>
        <taxon>Tracheophyta</taxon>
        <taxon>Spermatophyta</taxon>
        <taxon>Magnoliopsida</taxon>
        <taxon>eudicotyledons</taxon>
        <taxon>Gunneridae</taxon>
        <taxon>Pentapetalae</taxon>
        <taxon>rosids</taxon>
        <taxon>malvids</taxon>
        <taxon>Brassicales</taxon>
        <taxon>Brassicaceae</taxon>
        <taxon>Camelineae</taxon>
        <taxon>Arabidopsis</taxon>
    </lineage>
</organism>
<dbReference type="EMBL" id="AC010870">
    <property type="protein sequence ID" value="AAF24608.1"/>
    <property type="status" value="ALT_SEQ"/>
    <property type="molecule type" value="Genomic_DNA"/>
</dbReference>
<dbReference type="EMBL" id="CP002686">
    <property type="protein sequence ID" value="AEE73657.1"/>
    <property type="molecule type" value="Genomic_DNA"/>
</dbReference>
<dbReference type="EMBL" id="AY136347">
    <property type="protein sequence ID" value="AAM97013.1"/>
    <property type="molecule type" value="mRNA"/>
</dbReference>
<dbReference type="EMBL" id="BT010594">
    <property type="protein sequence ID" value="AAQ89616.1"/>
    <property type="molecule type" value="mRNA"/>
</dbReference>
<dbReference type="RefSeq" id="NP_186786.2">
    <property type="nucleotide sequence ID" value="NM_111003.5"/>
</dbReference>
<dbReference type="SMR" id="Q8L7C2"/>
<dbReference type="FunCoup" id="Q8L7C2">
    <property type="interactions" value="1859"/>
</dbReference>
<dbReference type="IntAct" id="Q8L7C2">
    <property type="interactions" value="5"/>
</dbReference>
<dbReference type="STRING" id="3702.Q8L7C2"/>
<dbReference type="GlyGen" id="Q8L7C2">
    <property type="glycosylation" value="1 site"/>
</dbReference>
<dbReference type="iPTMnet" id="Q8L7C2"/>
<dbReference type="PaxDb" id="3702-AT3G01370.1"/>
<dbReference type="ProteomicsDB" id="241228"/>
<dbReference type="EnsemblPlants" id="AT3G01370.1">
    <property type="protein sequence ID" value="AT3G01370.1"/>
    <property type="gene ID" value="AT3G01370"/>
</dbReference>
<dbReference type="GeneID" id="821288"/>
<dbReference type="Gramene" id="AT3G01370.1">
    <property type="protein sequence ID" value="AT3G01370.1"/>
    <property type="gene ID" value="AT3G01370"/>
</dbReference>
<dbReference type="KEGG" id="ath:AT3G01370"/>
<dbReference type="Araport" id="AT3G01370"/>
<dbReference type="TAIR" id="AT3G01370">
    <property type="gene designation" value="CFM2"/>
</dbReference>
<dbReference type="eggNOG" id="KOG1990">
    <property type="taxonomic scope" value="Eukaryota"/>
</dbReference>
<dbReference type="HOGENOM" id="CLU_006310_4_0_1"/>
<dbReference type="InParanoid" id="Q8L7C2"/>
<dbReference type="OMA" id="MNSGHHN"/>
<dbReference type="OrthoDB" id="551352at2759"/>
<dbReference type="PhylomeDB" id="Q8L7C2"/>
<dbReference type="PRO" id="PR:Q8L7C2"/>
<dbReference type="Proteomes" id="UP000006548">
    <property type="component" value="Chromosome 3"/>
</dbReference>
<dbReference type="ExpressionAtlas" id="Q8L7C2">
    <property type="expression patterns" value="baseline and differential"/>
</dbReference>
<dbReference type="GO" id="GO:0009507">
    <property type="term" value="C:chloroplast"/>
    <property type="evidence" value="ECO:0000255"/>
    <property type="project" value="TAIR"/>
</dbReference>
<dbReference type="GO" id="GO:0009570">
    <property type="term" value="C:chloroplast stroma"/>
    <property type="evidence" value="ECO:0007669"/>
    <property type="project" value="UniProtKB-SubCell"/>
</dbReference>
<dbReference type="GO" id="GO:0009532">
    <property type="term" value="C:plastid stroma"/>
    <property type="evidence" value="ECO:0000314"/>
    <property type="project" value="UniProtKB"/>
</dbReference>
<dbReference type="GO" id="GO:1990904">
    <property type="term" value="C:ribonucleoprotein complex"/>
    <property type="evidence" value="ECO:0007669"/>
    <property type="project" value="UniProtKB-KW"/>
</dbReference>
<dbReference type="GO" id="GO:0003729">
    <property type="term" value="F:mRNA binding"/>
    <property type="evidence" value="ECO:0000314"/>
    <property type="project" value="TAIR"/>
</dbReference>
<dbReference type="GO" id="GO:0000372">
    <property type="term" value="P:Group I intron splicing"/>
    <property type="evidence" value="ECO:0000315"/>
    <property type="project" value="TAIR"/>
</dbReference>
<dbReference type="GO" id="GO:0000373">
    <property type="term" value="P:Group II intron splicing"/>
    <property type="evidence" value="ECO:0000315"/>
    <property type="project" value="TAIR"/>
</dbReference>
<dbReference type="GO" id="GO:0006397">
    <property type="term" value="P:mRNA processing"/>
    <property type="evidence" value="ECO:0007669"/>
    <property type="project" value="UniProtKB-KW"/>
</dbReference>
<dbReference type="FunFam" id="3.30.110.60:FF:000003">
    <property type="entry name" value="CRM-domain containing factor CFM3B, chloroplastic"/>
    <property type="match status" value="1"/>
</dbReference>
<dbReference type="FunFam" id="3.30.110.60:FF:000002">
    <property type="entry name" value="CRS2-associated factor 1, chloroplastic"/>
    <property type="match status" value="2"/>
</dbReference>
<dbReference type="Gene3D" id="3.30.110.60">
    <property type="entry name" value="YhbY-like"/>
    <property type="match status" value="4"/>
</dbReference>
<dbReference type="InterPro" id="IPR045278">
    <property type="entry name" value="CRS1/CFM2/CFM3"/>
</dbReference>
<dbReference type="InterPro" id="IPR001890">
    <property type="entry name" value="RNA-binding_CRM"/>
</dbReference>
<dbReference type="InterPro" id="IPR035920">
    <property type="entry name" value="YhbY-like_sf"/>
</dbReference>
<dbReference type="PANTHER" id="PTHR31846:SF20">
    <property type="entry name" value="CRM-DOMAIN CONTAINING FACTOR CFM2, CHLOROPLASTIC"/>
    <property type="match status" value="1"/>
</dbReference>
<dbReference type="PANTHER" id="PTHR31846">
    <property type="entry name" value="CRS1 / YHBY (CRM) DOMAIN-CONTAINING PROTEIN"/>
    <property type="match status" value="1"/>
</dbReference>
<dbReference type="Pfam" id="PF01985">
    <property type="entry name" value="CRS1_YhbY"/>
    <property type="match status" value="4"/>
</dbReference>
<dbReference type="SMART" id="SM01103">
    <property type="entry name" value="CRS1_YhbY"/>
    <property type="match status" value="4"/>
</dbReference>
<dbReference type="SUPFAM" id="SSF75471">
    <property type="entry name" value="YhbY-like"/>
    <property type="match status" value="4"/>
</dbReference>
<dbReference type="PROSITE" id="PS51295">
    <property type="entry name" value="CRM"/>
    <property type="match status" value="4"/>
</dbReference>
<proteinExistence type="evidence at protein level"/>
<gene>
    <name evidence="5" type="primary">CFM2</name>
    <name evidence="8" type="ordered locus">At3g01370</name>
    <name evidence="9" type="ORF">T13O15.1</name>
</gene>
<name>CFM2_ARATH</name>
<feature type="transit peptide" description="Chloroplast" evidence="1">
    <location>
        <begin position="1"/>
        <end position="45"/>
    </location>
</feature>
<feature type="chain" id="PRO_0000435531" description="CRM-domain containing factor CFM2, chloroplastic">
    <location>
        <begin position="46"/>
        <end position="1011"/>
    </location>
</feature>
<feature type="domain" description="CRM 1" evidence="2">
    <location>
        <begin position="164"/>
        <end position="260"/>
    </location>
</feature>
<feature type="domain" description="CRM 2" evidence="2">
    <location>
        <begin position="376"/>
        <end position="473"/>
    </location>
</feature>
<feature type="domain" description="CRM 3" evidence="2">
    <location>
        <begin position="577"/>
        <end position="677"/>
    </location>
</feature>
<feature type="domain" description="CRM 4" evidence="2">
    <location>
        <begin position="873"/>
        <end position="972"/>
    </location>
</feature>
<feature type="region of interest" description="Disordered" evidence="3">
    <location>
        <begin position="77"/>
        <end position="96"/>
    </location>
</feature>
<feature type="region of interest" description="Disordered" evidence="3">
    <location>
        <begin position="721"/>
        <end position="810"/>
    </location>
</feature>
<feature type="region of interest" description="Disordered" evidence="3">
    <location>
        <begin position="841"/>
        <end position="872"/>
    </location>
</feature>
<feature type="compositionally biased region" description="Basic and acidic residues" evidence="3">
    <location>
        <begin position="77"/>
        <end position="90"/>
    </location>
</feature>
<feature type="compositionally biased region" description="Polar residues" evidence="3">
    <location>
        <begin position="722"/>
        <end position="736"/>
    </location>
</feature>
<feature type="compositionally biased region" description="Basic and acidic residues" evidence="3">
    <location>
        <begin position="743"/>
        <end position="757"/>
    </location>
</feature>
<feature type="compositionally biased region" description="Polar residues" evidence="3">
    <location>
        <begin position="762"/>
        <end position="771"/>
    </location>
</feature>
<feature type="compositionally biased region" description="Acidic residues" evidence="3">
    <location>
        <begin position="772"/>
        <end position="782"/>
    </location>
</feature>
<feature type="compositionally biased region" description="Polar residues" evidence="3">
    <location>
        <begin position="849"/>
        <end position="859"/>
    </location>
</feature>
<sequence>MLLPLFHQQPLILAKTFPDRIFPPFLVPNTLVSRRNVSRANSGIFCSSASGRKTLPQSAIQRIAEKLRSLGFVEEKHDSPTRRITGEESGKNSPGEIFVPLPKQLPIHRVGHTIDTSWSTPSYPVPKPGSGTAISRYHELKRVWKKETEMERKKEEKVPSLAELTLPPAELRRLRTVGIRLTKKLKIGKAGITEGIVNGIHERWRTTEVVKIFCEDISRMNMKRTHDVLETKTGGLVIWRSGSKILLYRGVNYQYPYFVSDRDLAHEAASGASSMDQGVVDSREKQSIAESSAPSITNKMVKPMLTQGVGSPDKVRFQLPGEVQLVEEADRLLEGLGPRFTDWWAYDPLPVDGDLLPAVVPDYRRPFRLLPYGVSPKLTDDEMTTIRRLGRPLPCHFALGRNRNLQGLAVAIVKLWEKCELAKIAVKRGVQNTNSELMAEELKWLTGGTLISRDKDFIVLYRGKDFLPSAVSSAIEERRRQTMIMENSSVHGNKLTENEEEIKPRAVKEDIELEAKDQKDHIQTHQMKSRQRNSPEAILEKTSMKLSMALEKKANAEKVLADLENRESPQLSDIDKEGITNDEKYMLRKIGLKMKPFLLLGRRGVFDGTIENMHLHWKYRELVKIICNEYSIEAAHKVAEILEAESGGILVAVEMVSKGYAIIVYRGKNYERPQCLRPQTLLSKREALKRSVEAQRRKSLKLHVLKLSNNIEELNRQLVEDSATNETWSDGESSNMMVEEETENQHTEPEKAREKIELGYSSDLSVPSSGEENWEDDSEGEVDPLTTSSQEYQEDESESASSQRHEGNSLDSTANLSVFAETGSANASSFHDRSLPHNSFLNANRKLPGSSTGSGSQISALRERKSENDGLVTDLSNRERLILRKQALKMKKRPPFAVGRSNVVTGLARTLKMHFQKNPLAIVNVKGRANGTSVQEVIAKLKEETGALLVSQEPSKVILYRGWGAEEEMKSFYPNNNVKSSINLPSTRSFVDDPPHVSPALIEAIRLECGL</sequence>
<reference key="1">
    <citation type="journal article" date="2000" name="Nature">
        <title>Sequence and analysis of chromosome 3 of the plant Arabidopsis thaliana.</title>
        <authorList>
            <person name="Salanoubat M."/>
            <person name="Lemcke K."/>
            <person name="Rieger M."/>
            <person name="Ansorge W."/>
            <person name="Unseld M."/>
            <person name="Fartmann B."/>
            <person name="Valle G."/>
            <person name="Bloecker H."/>
            <person name="Perez-Alonso M."/>
            <person name="Obermaier B."/>
            <person name="Delseny M."/>
            <person name="Boutry M."/>
            <person name="Grivell L.A."/>
            <person name="Mache R."/>
            <person name="Puigdomenech P."/>
            <person name="De Simone V."/>
            <person name="Choisne N."/>
            <person name="Artiguenave F."/>
            <person name="Robert C."/>
            <person name="Brottier P."/>
            <person name="Wincker P."/>
            <person name="Cattolico L."/>
            <person name="Weissenbach J."/>
            <person name="Saurin W."/>
            <person name="Quetier F."/>
            <person name="Schaefer M."/>
            <person name="Mueller-Auer S."/>
            <person name="Gabel C."/>
            <person name="Fuchs M."/>
            <person name="Benes V."/>
            <person name="Wurmbach E."/>
            <person name="Drzonek H."/>
            <person name="Erfle H."/>
            <person name="Jordan N."/>
            <person name="Bangert S."/>
            <person name="Wiedelmann R."/>
            <person name="Kranz H."/>
            <person name="Voss H."/>
            <person name="Holland R."/>
            <person name="Brandt P."/>
            <person name="Nyakatura G."/>
            <person name="Vezzi A."/>
            <person name="D'Angelo M."/>
            <person name="Pallavicini A."/>
            <person name="Toppo S."/>
            <person name="Simionati B."/>
            <person name="Conrad A."/>
            <person name="Hornischer K."/>
            <person name="Kauer G."/>
            <person name="Loehnert T.-H."/>
            <person name="Nordsiek G."/>
            <person name="Reichelt J."/>
            <person name="Scharfe M."/>
            <person name="Schoen O."/>
            <person name="Bargues M."/>
            <person name="Terol J."/>
            <person name="Climent J."/>
            <person name="Navarro P."/>
            <person name="Collado C."/>
            <person name="Perez-Perez A."/>
            <person name="Ottenwaelder B."/>
            <person name="Duchemin D."/>
            <person name="Cooke R."/>
            <person name="Laudie M."/>
            <person name="Berger-Llauro C."/>
            <person name="Purnelle B."/>
            <person name="Masuy D."/>
            <person name="de Haan M."/>
            <person name="Maarse A.C."/>
            <person name="Alcaraz J.-P."/>
            <person name="Cottet A."/>
            <person name="Casacuberta E."/>
            <person name="Monfort A."/>
            <person name="Argiriou A."/>
            <person name="Flores M."/>
            <person name="Liguori R."/>
            <person name="Vitale D."/>
            <person name="Mannhaupt G."/>
            <person name="Haase D."/>
            <person name="Schoof H."/>
            <person name="Rudd S."/>
            <person name="Zaccaria P."/>
            <person name="Mewes H.-W."/>
            <person name="Mayer K.F.X."/>
            <person name="Kaul S."/>
            <person name="Town C.D."/>
            <person name="Koo H.L."/>
            <person name="Tallon L.J."/>
            <person name="Jenkins J."/>
            <person name="Rooney T."/>
            <person name="Rizzo M."/>
            <person name="Walts A."/>
            <person name="Utterback T."/>
            <person name="Fujii C.Y."/>
            <person name="Shea T.P."/>
            <person name="Creasy T.H."/>
            <person name="Haas B."/>
            <person name="Maiti R."/>
            <person name="Wu D."/>
            <person name="Peterson J."/>
            <person name="Van Aken S."/>
            <person name="Pai G."/>
            <person name="Militscher J."/>
            <person name="Sellers P."/>
            <person name="Gill J.E."/>
            <person name="Feldblyum T.V."/>
            <person name="Preuss D."/>
            <person name="Lin X."/>
            <person name="Nierman W.C."/>
            <person name="Salzberg S.L."/>
            <person name="White O."/>
            <person name="Venter J.C."/>
            <person name="Fraser C.M."/>
            <person name="Kaneko T."/>
            <person name="Nakamura Y."/>
            <person name="Sato S."/>
            <person name="Kato T."/>
            <person name="Asamizu E."/>
            <person name="Sasamoto S."/>
            <person name="Kimura T."/>
            <person name="Idesawa K."/>
            <person name="Kawashima K."/>
            <person name="Kishida Y."/>
            <person name="Kiyokawa C."/>
            <person name="Kohara M."/>
            <person name="Matsumoto M."/>
            <person name="Matsuno A."/>
            <person name="Muraki A."/>
            <person name="Nakayama S."/>
            <person name="Nakazaki N."/>
            <person name="Shinpo S."/>
            <person name="Takeuchi C."/>
            <person name="Wada T."/>
            <person name="Watanabe A."/>
            <person name="Yamada M."/>
            <person name="Yasuda M."/>
            <person name="Tabata S."/>
        </authorList>
    </citation>
    <scope>NUCLEOTIDE SEQUENCE [LARGE SCALE GENOMIC DNA]</scope>
    <source>
        <strain>cv. Columbia</strain>
    </source>
</reference>
<reference key="2">
    <citation type="journal article" date="2017" name="Plant J.">
        <title>Araport11: a complete reannotation of the Arabidopsis thaliana reference genome.</title>
        <authorList>
            <person name="Cheng C.Y."/>
            <person name="Krishnakumar V."/>
            <person name="Chan A.P."/>
            <person name="Thibaud-Nissen F."/>
            <person name="Schobel S."/>
            <person name="Town C.D."/>
        </authorList>
    </citation>
    <scope>GENOME REANNOTATION</scope>
    <source>
        <strain>cv. Columbia</strain>
    </source>
</reference>
<reference key="3">
    <citation type="journal article" date="2003" name="Science">
        <title>Empirical analysis of transcriptional activity in the Arabidopsis genome.</title>
        <authorList>
            <person name="Yamada K."/>
            <person name="Lim J."/>
            <person name="Dale J.M."/>
            <person name="Chen H."/>
            <person name="Shinn P."/>
            <person name="Palm C.J."/>
            <person name="Southwick A.M."/>
            <person name="Wu H.C."/>
            <person name="Kim C.J."/>
            <person name="Nguyen M."/>
            <person name="Pham P.K."/>
            <person name="Cheuk R.F."/>
            <person name="Karlin-Newmann G."/>
            <person name="Liu S.X."/>
            <person name="Lam B."/>
            <person name="Sakano H."/>
            <person name="Wu T."/>
            <person name="Yu G."/>
            <person name="Miranda M."/>
            <person name="Quach H.L."/>
            <person name="Tripp M."/>
            <person name="Chang C.H."/>
            <person name="Lee J.M."/>
            <person name="Toriumi M.J."/>
            <person name="Chan M.M."/>
            <person name="Tang C.C."/>
            <person name="Onodera C.S."/>
            <person name="Deng J.M."/>
            <person name="Akiyama K."/>
            <person name="Ansari Y."/>
            <person name="Arakawa T."/>
            <person name="Banh J."/>
            <person name="Banno F."/>
            <person name="Bowser L."/>
            <person name="Brooks S.Y."/>
            <person name="Carninci P."/>
            <person name="Chao Q."/>
            <person name="Choy N."/>
            <person name="Enju A."/>
            <person name="Goldsmith A.D."/>
            <person name="Gurjal M."/>
            <person name="Hansen N.F."/>
            <person name="Hayashizaki Y."/>
            <person name="Johnson-Hopson C."/>
            <person name="Hsuan V.W."/>
            <person name="Iida K."/>
            <person name="Karnes M."/>
            <person name="Khan S."/>
            <person name="Koesema E."/>
            <person name="Ishida J."/>
            <person name="Jiang P.X."/>
            <person name="Jones T."/>
            <person name="Kawai J."/>
            <person name="Kamiya A."/>
            <person name="Meyers C."/>
            <person name="Nakajima M."/>
            <person name="Narusaka M."/>
            <person name="Seki M."/>
            <person name="Sakurai T."/>
            <person name="Satou M."/>
            <person name="Tamse R."/>
            <person name="Vaysberg M."/>
            <person name="Wallender E.K."/>
            <person name="Wong C."/>
            <person name="Yamamura Y."/>
            <person name="Yuan S."/>
            <person name="Shinozaki K."/>
            <person name="Davis R.W."/>
            <person name="Theologis A."/>
            <person name="Ecker J.R."/>
        </authorList>
    </citation>
    <scope>NUCLEOTIDE SEQUENCE [LARGE SCALE MRNA]</scope>
    <source>
        <strain>cv. Columbia</strain>
    </source>
</reference>
<reference key="4">
    <citation type="submission" date="2003-10" db="EMBL/GenBank/DDBJ databases">
        <title>Arabidopsis ORF clones.</title>
        <authorList>
            <person name="Cheuk R.F."/>
            <person name="Chen H."/>
            <person name="Kim C.J."/>
            <person name="Shinn P."/>
            <person name="Carninci P."/>
            <person name="Hayashizaki Y."/>
            <person name="Ishida J."/>
            <person name="Kamiya A."/>
            <person name="Kawai J."/>
            <person name="Narusaka M."/>
            <person name="Sakurai T."/>
            <person name="Satou M."/>
            <person name="Seki M."/>
            <person name="Shinozaki K."/>
            <person name="Ecker J.R."/>
        </authorList>
    </citation>
    <scope>NUCLEOTIDE SEQUENCE [LARGE SCALE MRNA]</scope>
    <source>
        <strain>cv. Columbia</strain>
    </source>
</reference>
<reference key="5">
    <citation type="journal article" date="2007" name="Plant Cell">
        <title>A CRM domain protein functions dually in group I and group II intron splicing in land plant chloroplasts.</title>
        <authorList>
            <person name="Asakura Y."/>
            <person name="Barkan A."/>
        </authorList>
    </citation>
    <scope>FUNCTION</scope>
    <scope>SUBUNIT</scope>
    <scope>SUBCELLULAR LOCATION</scope>
    <scope>DISRUPTION PHENOTYPE</scope>
</reference>
<accession>Q8L7C2</accession>
<accession>Q9SGI0</accession>
<keyword id="KW-0150">Chloroplast</keyword>
<keyword id="KW-0507">mRNA processing</keyword>
<keyword id="KW-0508">mRNA splicing</keyword>
<keyword id="KW-0934">Plastid</keyword>
<keyword id="KW-1185">Reference proteome</keyword>
<keyword id="KW-0677">Repeat</keyword>
<keyword id="KW-0687">Ribonucleoprotein</keyword>
<keyword id="KW-0694">RNA-binding</keyword>
<keyword id="KW-0809">Transit peptide</keyword>
<protein>
    <recommendedName>
        <fullName evidence="6">CRM-domain containing factor CFM2, chloroplastic</fullName>
    </recommendedName>
    <alternativeName>
        <fullName evidence="5">Protein CRM FAMILY MEMBER 2</fullName>
        <shortName evidence="5">AtCFM2</shortName>
    </alternativeName>
</protein>
<comment type="function">
    <text evidence="4">Binds specific group II introns in chloroplasts and facilitates their splicing. Acts on both subgroup IIA and subgroup IIB introns. The substrates of the subgroup IIB also require the CRM domain proteins CAF1 or CAF2, with a simultaneous binding of CFM2 and CAF1 or CAF2. Can bind to and promote the splicing of the single group I intron in chloroplast tRNA transcript of trnL-UAA gene.</text>
</comment>
<comment type="subunit">
    <text evidence="4">Interacts with RNA. Part of large ribonucleo-protein particles that contain CAF1 and/or CAF2.</text>
</comment>
<comment type="subcellular location">
    <subcellularLocation>
        <location evidence="7">Plastid</location>
        <location evidence="7">Chloroplast stroma</location>
    </subcellularLocation>
</comment>
<comment type="disruption phenotype">
    <text evidence="4">Albino seeds that germinate poorly and die soon after germination.</text>
</comment>
<comment type="sequence caution" evidence="6">
    <conflict type="erroneous gene model prediction">
        <sequence resource="EMBL-CDS" id="AAF24608"/>
    </conflict>
</comment>
<evidence type="ECO:0000255" key="1"/>
<evidence type="ECO:0000255" key="2">
    <source>
        <dbReference type="PROSITE-ProRule" id="PRU00626"/>
    </source>
</evidence>
<evidence type="ECO:0000256" key="3">
    <source>
        <dbReference type="SAM" id="MobiDB-lite"/>
    </source>
</evidence>
<evidence type="ECO:0000269" key="4">
    <source>
    </source>
</evidence>
<evidence type="ECO:0000303" key="5">
    <source>
    </source>
</evidence>
<evidence type="ECO:0000305" key="6"/>
<evidence type="ECO:0000305" key="7">
    <source>
    </source>
</evidence>
<evidence type="ECO:0000312" key="8">
    <source>
        <dbReference type="Araport" id="AT3G01370"/>
    </source>
</evidence>
<evidence type="ECO:0000312" key="9">
    <source>
        <dbReference type="EMBL" id="AAF24608.1"/>
    </source>
</evidence>